<proteinExistence type="inferred from homology"/>
<reference key="1">
    <citation type="journal article" date="2008" name="Proc. Natl. Acad. Sci. U.S.A.">
        <title>The genome of Cyanothece 51142, a unicellular diazotrophic cyanobacterium important in the marine nitrogen cycle.</title>
        <authorList>
            <person name="Welsh E.A."/>
            <person name="Liberton M."/>
            <person name="Stoeckel J."/>
            <person name="Loh T."/>
            <person name="Elvitigala T."/>
            <person name="Wang C."/>
            <person name="Wollam A."/>
            <person name="Fulton R.S."/>
            <person name="Clifton S.W."/>
            <person name="Jacobs J.M."/>
            <person name="Aurora R."/>
            <person name="Ghosh B.K."/>
            <person name="Sherman L.A."/>
            <person name="Smith R.D."/>
            <person name="Wilson R.K."/>
            <person name="Pakrasi H.B."/>
        </authorList>
    </citation>
    <scope>NUCLEOTIDE SEQUENCE [LARGE SCALE GENOMIC DNA]</scope>
    <source>
        <strain>ATCC 51142 / BH68</strain>
    </source>
</reference>
<gene>
    <name evidence="2" type="primary">rpsL</name>
    <name evidence="2" type="synonym">rps12</name>
    <name type="ordered locus">cce_4091</name>
</gene>
<organism>
    <name type="scientific">Crocosphaera subtropica (strain ATCC 51142 / BH68)</name>
    <name type="common">Cyanothece sp. (strain ATCC 51142)</name>
    <dbReference type="NCBI Taxonomy" id="43989"/>
    <lineage>
        <taxon>Bacteria</taxon>
        <taxon>Bacillati</taxon>
        <taxon>Cyanobacteriota</taxon>
        <taxon>Cyanophyceae</taxon>
        <taxon>Oscillatoriophycideae</taxon>
        <taxon>Chroococcales</taxon>
        <taxon>Aphanothecaceae</taxon>
        <taxon>Crocosphaera</taxon>
        <taxon>Crocosphaera subtropica</taxon>
    </lineage>
</organism>
<protein>
    <recommendedName>
        <fullName evidence="2">Small ribosomal subunit protein uS12</fullName>
    </recommendedName>
    <alternativeName>
        <fullName evidence="4">30S ribosomal protein S12</fullName>
    </alternativeName>
</protein>
<dbReference type="EMBL" id="CP000806">
    <property type="protein sequence ID" value="ACB53439.1"/>
    <property type="molecule type" value="Genomic_DNA"/>
</dbReference>
<dbReference type="RefSeq" id="WP_007310088.1">
    <property type="nucleotide sequence ID" value="NC_010546.1"/>
</dbReference>
<dbReference type="SMR" id="B1WQY7"/>
<dbReference type="STRING" id="43989.cce_4091"/>
<dbReference type="GeneID" id="88765473"/>
<dbReference type="KEGG" id="cyt:cce_4091"/>
<dbReference type="eggNOG" id="COG0048">
    <property type="taxonomic scope" value="Bacteria"/>
</dbReference>
<dbReference type="HOGENOM" id="CLU_104295_1_2_3"/>
<dbReference type="OrthoDB" id="9802366at2"/>
<dbReference type="Proteomes" id="UP000001203">
    <property type="component" value="Chromosome circular"/>
</dbReference>
<dbReference type="GO" id="GO:0015935">
    <property type="term" value="C:small ribosomal subunit"/>
    <property type="evidence" value="ECO:0007669"/>
    <property type="project" value="InterPro"/>
</dbReference>
<dbReference type="GO" id="GO:0019843">
    <property type="term" value="F:rRNA binding"/>
    <property type="evidence" value="ECO:0007669"/>
    <property type="project" value="UniProtKB-UniRule"/>
</dbReference>
<dbReference type="GO" id="GO:0003735">
    <property type="term" value="F:structural constituent of ribosome"/>
    <property type="evidence" value="ECO:0007669"/>
    <property type="project" value="InterPro"/>
</dbReference>
<dbReference type="GO" id="GO:0000049">
    <property type="term" value="F:tRNA binding"/>
    <property type="evidence" value="ECO:0007669"/>
    <property type="project" value="UniProtKB-UniRule"/>
</dbReference>
<dbReference type="GO" id="GO:0006412">
    <property type="term" value="P:translation"/>
    <property type="evidence" value="ECO:0007669"/>
    <property type="project" value="UniProtKB-UniRule"/>
</dbReference>
<dbReference type="CDD" id="cd03368">
    <property type="entry name" value="Ribosomal_S12"/>
    <property type="match status" value="1"/>
</dbReference>
<dbReference type="FunFam" id="2.40.50.140:FF:000001">
    <property type="entry name" value="30S ribosomal protein S12"/>
    <property type="match status" value="1"/>
</dbReference>
<dbReference type="Gene3D" id="2.40.50.140">
    <property type="entry name" value="Nucleic acid-binding proteins"/>
    <property type="match status" value="1"/>
</dbReference>
<dbReference type="HAMAP" id="MF_00403_B">
    <property type="entry name" value="Ribosomal_uS12_B"/>
    <property type="match status" value="1"/>
</dbReference>
<dbReference type="InterPro" id="IPR012340">
    <property type="entry name" value="NA-bd_OB-fold"/>
</dbReference>
<dbReference type="InterPro" id="IPR006032">
    <property type="entry name" value="Ribosomal_uS12"/>
</dbReference>
<dbReference type="InterPro" id="IPR005679">
    <property type="entry name" value="Ribosomal_uS12_bac"/>
</dbReference>
<dbReference type="NCBIfam" id="TIGR00981">
    <property type="entry name" value="rpsL_bact"/>
    <property type="match status" value="1"/>
</dbReference>
<dbReference type="PANTHER" id="PTHR11652">
    <property type="entry name" value="30S RIBOSOMAL PROTEIN S12 FAMILY MEMBER"/>
    <property type="match status" value="1"/>
</dbReference>
<dbReference type="Pfam" id="PF00164">
    <property type="entry name" value="Ribosom_S12_S23"/>
    <property type="match status" value="1"/>
</dbReference>
<dbReference type="PIRSF" id="PIRSF002133">
    <property type="entry name" value="Ribosomal_S12/S23"/>
    <property type="match status" value="1"/>
</dbReference>
<dbReference type="PRINTS" id="PR01034">
    <property type="entry name" value="RIBOSOMALS12"/>
</dbReference>
<dbReference type="SUPFAM" id="SSF50249">
    <property type="entry name" value="Nucleic acid-binding proteins"/>
    <property type="match status" value="1"/>
</dbReference>
<dbReference type="PROSITE" id="PS00055">
    <property type="entry name" value="RIBOSOMAL_S12"/>
    <property type="match status" value="1"/>
</dbReference>
<feature type="chain" id="PRO_1000134628" description="Small ribosomal subunit protein uS12">
    <location>
        <begin position="1"/>
        <end position="124"/>
    </location>
</feature>
<feature type="region of interest" description="Disordered" evidence="3">
    <location>
        <begin position="1"/>
        <end position="28"/>
    </location>
</feature>
<feature type="region of interest" description="Disordered" evidence="3">
    <location>
        <begin position="101"/>
        <end position="124"/>
    </location>
</feature>
<feature type="compositionally biased region" description="Basic residues" evidence="3">
    <location>
        <begin position="113"/>
        <end position="124"/>
    </location>
</feature>
<feature type="modified residue" description="3-methylthioaspartic acid" evidence="1">
    <location>
        <position position="89"/>
    </location>
</feature>
<keyword id="KW-0488">Methylation</keyword>
<keyword id="KW-1185">Reference proteome</keyword>
<keyword id="KW-0687">Ribonucleoprotein</keyword>
<keyword id="KW-0689">Ribosomal protein</keyword>
<keyword id="KW-0694">RNA-binding</keyword>
<keyword id="KW-0699">rRNA-binding</keyword>
<keyword id="KW-0820">tRNA-binding</keyword>
<accession>B1WQY7</accession>
<evidence type="ECO:0000250" key="1"/>
<evidence type="ECO:0000255" key="2">
    <source>
        <dbReference type="HAMAP-Rule" id="MF_00403"/>
    </source>
</evidence>
<evidence type="ECO:0000256" key="3">
    <source>
        <dbReference type="SAM" id="MobiDB-lite"/>
    </source>
</evidence>
<evidence type="ECO:0000305" key="4"/>
<comment type="function">
    <text evidence="2">With S4 and S5 plays an important role in translational accuracy.</text>
</comment>
<comment type="function">
    <text evidence="2">Interacts with and stabilizes bases of the 16S rRNA that are involved in tRNA selection in the A site and with the mRNA backbone. Located at the interface of the 30S and 50S subunits, it traverses the body of the 30S subunit contacting proteins on the other side and probably holding the rRNA structure together. The combined cluster of proteins S8, S12 and S17 appears to hold together the shoulder and platform of the 30S subunit.</text>
</comment>
<comment type="subunit">
    <text evidence="2">Part of the 30S ribosomal subunit. Contacts proteins S8 and S17. May interact with IF1 in the 30S initiation complex.</text>
</comment>
<comment type="similarity">
    <text evidence="2">Belongs to the universal ribosomal protein uS12 family.</text>
</comment>
<sequence length="124" mass="13931">MPTIQQLIRSERSKAKKKTKSPALKQCPQRRGVCTRVYTTTPKKPNSALRKVARVRLTSGFEVTAYIPGIGHNLQEHSVVLIRGGRVKDLPGVRYHIIRGTLDAQGVKDRKQGRSKYGTKKPKE</sequence>
<name>RS12_CROS5</name>